<comment type="function">
    <text evidence="2">TATA box-binding transcription factor. Members of the TBP family are differentially required to regulate transcription and development during early embryogenesis.</text>
</comment>
<comment type="subcellular location">
    <subcellularLocation>
        <location evidence="1">Nucleus</location>
    </subcellularLocation>
</comment>
<comment type="similarity">
    <text evidence="3">Belongs to the TBP family.</text>
</comment>
<sequence>MSSQSSPISLTNNDLEISSNNNKPIIKQLPVPTNEIEKPVIQNIVATVELDCTINLQDVVRRVRNAEYNPKRFGALIIRITNPKTTALVFHSGKLVVTGGKTVDDSRLAGRKYARILQRLGYNVKFNHFKIQNVVASCDMKFAISLKELIQLAPKITKYEPEIFPGVVYRLADPKMVLLIFASGKIVFTGGKEIEQINKAFSEIYKILLQVANNDN</sequence>
<proteinExistence type="inferred from homology"/>
<keyword id="KW-0238">DNA-binding</keyword>
<keyword id="KW-0539">Nucleus</keyword>
<keyword id="KW-1185">Reference proteome</keyword>
<keyword id="KW-0677">Repeat</keyword>
<keyword id="KW-0804">Transcription</keyword>
<keyword id="KW-0805">Transcription regulation</keyword>
<dbReference type="EMBL" id="EU052294">
    <property type="protein sequence ID" value="ABS89251.1"/>
    <property type="molecule type" value="Genomic_DNA"/>
</dbReference>
<dbReference type="EMBL" id="DS571229">
    <property type="protein sequence ID" value="EAL49549.1"/>
    <property type="molecule type" value="Genomic_DNA"/>
</dbReference>
<dbReference type="RefSeq" id="XP_654935.1">
    <property type="nucleotide sequence ID" value="XM_649843.1"/>
</dbReference>
<dbReference type="SMR" id="A7UFC2"/>
<dbReference type="STRING" id="5759.A7UFC2"/>
<dbReference type="GeneID" id="3409255"/>
<dbReference type="KEGG" id="ehi:EHI_077240"/>
<dbReference type="VEuPathDB" id="AmoebaDB:EHI5A_011690"/>
<dbReference type="VEuPathDB" id="AmoebaDB:EHI7A_077400"/>
<dbReference type="VEuPathDB" id="AmoebaDB:EHI8A_114190"/>
<dbReference type="VEuPathDB" id="AmoebaDB:EHI_077240"/>
<dbReference type="VEuPathDB" id="AmoebaDB:KM1_014200"/>
<dbReference type="eggNOG" id="KOG3302">
    <property type="taxonomic scope" value="Eukaryota"/>
</dbReference>
<dbReference type="InParanoid" id="A7UFC2"/>
<dbReference type="OMA" id="FHFKIAE"/>
<dbReference type="OrthoDB" id="2127950at2759"/>
<dbReference type="Proteomes" id="UP000001926">
    <property type="component" value="Partially assembled WGS sequence"/>
</dbReference>
<dbReference type="GO" id="GO:0005669">
    <property type="term" value="C:transcription factor TFIID complex"/>
    <property type="evidence" value="ECO:0000303"/>
    <property type="project" value="UniProtKB"/>
</dbReference>
<dbReference type="GO" id="GO:0003677">
    <property type="term" value="F:DNA binding"/>
    <property type="evidence" value="ECO:0000314"/>
    <property type="project" value="UniProtKB"/>
</dbReference>
<dbReference type="GO" id="GO:0016251">
    <property type="term" value="F:RNA polymerase II general transcription initiation factor activity"/>
    <property type="evidence" value="ECO:0000318"/>
    <property type="project" value="GO_Central"/>
</dbReference>
<dbReference type="GO" id="GO:0006352">
    <property type="term" value="P:DNA-templated transcription initiation"/>
    <property type="evidence" value="ECO:0000318"/>
    <property type="project" value="GO_Central"/>
</dbReference>
<dbReference type="GO" id="GO:0060261">
    <property type="term" value="P:positive regulation of transcription initiation by RNA polymerase II"/>
    <property type="evidence" value="ECO:0000314"/>
    <property type="project" value="UniProtKB"/>
</dbReference>
<dbReference type="CDD" id="cd04516">
    <property type="entry name" value="TBP_eukaryotes"/>
    <property type="match status" value="1"/>
</dbReference>
<dbReference type="FunFam" id="3.30.310.10:FF:000005">
    <property type="entry name" value="TATA box-binding protein-like 1"/>
    <property type="match status" value="1"/>
</dbReference>
<dbReference type="Gene3D" id="3.30.310.10">
    <property type="entry name" value="TATA-Binding Protein"/>
    <property type="match status" value="2"/>
</dbReference>
<dbReference type="HAMAP" id="MF_00408">
    <property type="entry name" value="TATA_bind_prot_arch"/>
    <property type="match status" value="1"/>
</dbReference>
<dbReference type="InterPro" id="IPR000814">
    <property type="entry name" value="TBP"/>
</dbReference>
<dbReference type="InterPro" id="IPR030491">
    <property type="entry name" value="TBP_CS"/>
</dbReference>
<dbReference type="InterPro" id="IPR012295">
    <property type="entry name" value="TBP_dom_sf"/>
</dbReference>
<dbReference type="InterPro" id="IPR033710">
    <property type="entry name" value="TBP_eukaryotic"/>
</dbReference>
<dbReference type="PANTHER" id="PTHR10126">
    <property type="entry name" value="TATA-BOX BINDING PROTEIN"/>
    <property type="match status" value="1"/>
</dbReference>
<dbReference type="Pfam" id="PF00352">
    <property type="entry name" value="TBP"/>
    <property type="match status" value="2"/>
</dbReference>
<dbReference type="PRINTS" id="PR00686">
    <property type="entry name" value="TIFACTORIID"/>
</dbReference>
<dbReference type="SUPFAM" id="SSF55945">
    <property type="entry name" value="TATA-box binding protein-like"/>
    <property type="match status" value="2"/>
</dbReference>
<dbReference type="PROSITE" id="PS00351">
    <property type="entry name" value="TFIID"/>
    <property type="match status" value="2"/>
</dbReference>
<feature type="chain" id="PRO_0000394123" description="TATA-box-binding protein-like 1">
    <location>
        <begin position="1"/>
        <end position="216"/>
    </location>
</feature>
<feature type="repeat" description="1">
    <location>
        <begin position="38"/>
        <end position="121"/>
    </location>
</feature>
<feature type="repeat" description="2">
    <location>
        <begin position="126"/>
        <end position="210"/>
    </location>
</feature>
<reference key="1">
    <citation type="journal article" date="2010" name="Protein Expr. Purif.">
        <title>Entamoeba histolytica: a unicellular organism containing two active genes encoding for members of the TBP family.</title>
        <authorList>
            <person name="Castanon-Sanchez C.A."/>
            <person name="Luna-Arias J.P."/>
            <person name="de Dios-Bravo M.G."/>
            <person name="Herrera-Aguirre M.E."/>
            <person name="Olivares-Trejo J.J."/>
            <person name="Orozco E."/>
            <person name="Hernandez J.M."/>
        </authorList>
    </citation>
    <scope>NUCLEOTIDE SEQUENCE [GENOMIC DNA]</scope>
    <scope>FUNCTION</scope>
</reference>
<reference key="2">
    <citation type="journal article" date="2005" name="Nature">
        <title>The genome of the protist parasite Entamoeba histolytica.</title>
        <authorList>
            <person name="Loftus B.J."/>
            <person name="Anderson I."/>
            <person name="Davies R."/>
            <person name="Alsmark U.C."/>
            <person name="Samuelson J."/>
            <person name="Amedeo P."/>
            <person name="Roncaglia P."/>
            <person name="Berriman M."/>
            <person name="Hirt R.P."/>
            <person name="Mann B.J."/>
            <person name="Nozaki T."/>
            <person name="Suh B."/>
            <person name="Pop M."/>
            <person name="Duchene M."/>
            <person name="Ackers J."/>
            <person name="Tannich E."/>
            <person name="Leippe M."/>
            <person name="Hofer M."/>
            <person name="Bruchhaus I."/>
            <person name="Willhoeft U."/>
            <person name="Bhattacharya A."/>
            <person name="Chillingworth T."/>
            <person name="Churcher C.M."/>
            <person name="Hance Z."/>
            <person name="Harris B."/>
            <person name="Harris D."/>
            <person name="Jagels K."/>
            <person name="Moule S."/>
            <person name="Mungall K.L."/>
            <person name="Ormond D."/>
            <person name="Squares R."/>
            <person name="Whitehead S."/>
            <person name="Quail M.A."/>
            <person name="Rabbinowitsch E."/>
            <person name="Norbertczak H."/>
            <person name="Price C."/>
            <person name="Wang Z."/>
            <person name="Guillen N."/>
            <person name="Gilchrist C."/>
            <person name="Stroup S.E."/>
            <person name="Bhattacharya S."/>
            <person name="Lohia A."/>
            <person name="Foster P.G."/>
            <person name="Sicheritz-Ponten T."/>
            <person name="Weber C."/>
            <person name="Singh U."/>
            <person name="Mukherjee C."/>
            <person name="El-Sayed N.M.A."/>
            <person name="Petri W.A."/>
            <person name="Clark C.G."/>
            <person name="Embley T.M."/>
            <person name="Barrell B.G."/>
            <person name="Fraser C.M."/>
            <person name="Hall N."/>
        </authorList>
    </citation>
    <scope>NUCLEOTIDE SEQUENCE [LARGE SCALE GENOMIC DNA]</scope>
    <source>
        <strain>ATCC 30459 / HM-1:IMSS / ABRM</strain>
    </source>
</reference>
<reference key="3">
    <citation type="journal article" date="2010" name="PLoS Negl. Trop. Dis.">
        <title>New assembly, reannotation and analysis of the Entamoeba histolytica genome reveal new genomic features and protein content information.</title>
        <authorList>
            <person name="Lorenzi H.A."/>
            <person name="Puiu D."/>
            <person name="Miller J.R."/>
            <person name="Brinkac L.M."/>
            <person name="Amedeo P."/>
            <person name="Hall N."/>
            <person name="Caler E.V."/>
        </authorList>
    </citation>
    <scope>GENOME REANNOTATION</scope>
    <source>
        <strain>ATCC 30459 / HM-1:IMSS / ABRM</strain>
    </source>
</reference>
<protein>
    <recommendedName>
        <fullName>TATA-box-binding protein-like 1</fullName>
        <shortName>EhTRF1</shortName>
    </recommendedName>
</protein>
<gene>
    <name type="primary">trf1</name>
    <name type="ORF">EHI_077240</name>
</gene>
<name>TBPL1_ENTH1</name>
<accession>A7UFC2</accession>
<accession>C4M2T3</accession>
<organism>
    <name type="scientific">Entamoeba histolytica (strain ATCC 30459 / HM-1:IMSS / ABRM)</name>
    <dbReference type="NCBI Taxonomy" id="294381"/>
    <lineage>
        <taxon>Eukaryota</taxon>
        <taxon>Amoebozoa</taxon>
        <taxon>Evosea</taxon>
        <taxon>Archamoebae</taxon>
        <taxon>Mastigamoebida</taxon>
        <taxon>Entamoebidae</taxon>
        <taxon>Entamoeba</taxon>
    </lineage>
</organism>
<evidence type="ECO:0000250" key="1"/>
<evidence type="ECO:0000269" key="2">
    <source>
    </source>
</evidence>
<evidence type="ECO:0000305" key="3"/>